<dbReference type="EC" id="1.1.1.37" evidence="1"/>
<dbReference type="EMBL" id="CP000001">
    <property type="protein sequence ID" value="AAU15935.1"/>
    <property type="molecule type" value="Genomic_DNA"/>
</dbReference>
<dbReference type="RefSeq" id="WP_000153226.1">
    <property type="nucleotide sequence ID" value="NZ_CP009968.1"/>
</dbReference>
<dbReference type="SMR" id="Q633K5"/>
<dbReference type="KEGG" id="bcz:BCE33L4333"/>
<dbReference type="PATRIC" id="fig|288681.22.peg.1039"/>
<dbReference type="Proteomes" id="UP000002612">
    <property type="component" value="Chromosome"/>
</dbReference>
<dbReference type="GO" id="GO:0004459">
    <property type="term" value="F:L-lactate dehydrogenase activity"/>
    <property type="evidence" value="ECO:0007669"/>
    <property type="project" value="TreeGrafter"/>
</dbReference>
<dbReference type="GO" id="GO:0030060">
    <property type="term" value="F:L-malate dehydrogenase (NAD+) activity"/>
    <property type="evidence" value="ECO:0007669"/>
    <property type="project" value="UniProtKB-UniRule"/>
</dbReference>
<dbReference type="GO" id="GO:0006089">
    <property type="term" value="P:lactate metabolic process"/>
    <property type="evidence" value="ECO:0007669"/>
    <property type="project" value="TreeGrafter"/>
</dbReference>
<dbReference type="GO" id="GO:0006099">
    <property type="term" value="P:tricarboxylic acid cycle"/>
    <property type="evidence" value="ECO:0007669"/>
    <property type="project" value="UniProtKB-UniRule"/>
</dbReference>
<dbReference type="CDD" id="cd01339">
    <property type="entry name" value="LDH-like_MDH"/>
    <property type="match status" value="1"/>
</dbReference>
<dbReference type="FunFam" id="3.40.50.720:FF:000018">
    <property type="entry name" value="Malate dehydrogenase"/>
    <property type="match status" value="1"/>
</dbReference>
<dbReference type="FunFam" id="3.90.110.10:FF:000004">
    <property type="entry name" value="Malate dehydrogenase"/>
    <property type="match status" value="1"/>
</dbReference>
<dbReference type="Gene3D" id="3.90.110.10">
    <property type="entry name" value="Lactate dehydrogenase/glycoside hydrolase, family 4, C-terminal"/>
    <property type="match status" value="1"/>
</dbReference>
<dbReference type="Gene3D" id="3.40.50.720">
    <property type="entry name" value="NAD(P)-binding Rossmann-like Domain"/>
    <property type="match status" value="1"/>
</dbReference>
<dbReference type="HAMAP" id="MF_00487">
    <property type="entry name" value="Malate_dehydrog_3"/>
    <property type="match status" value="1"/>
</dbReference>
<dbReference type="InterPro" id="IPR001557">
    <property type="entry name" value="L-lactate/malate_DH"/>
</dbReference>
<dbReference type="InterPro" id="IPR022383">
    <property type="entry name" value="Lactate/malate_DH_C"/>
</dbReference>
<dbReference type="InterPro" id="IPR001236">
    <property type="entry name" value="Lactate/malate_DH_N"/>
</dbReference>
<dbReference type="InterPro" id="IPR015955">
    <property type="entry name" value="Lactate_DH/Glyco_Ohase_4_C"/>
</dbReference>
<dbReference type="InterPro" id="IPR011275">
    <property type="entry name" value="Malate_DH_type3"/>
</dbReference>
<dbReference type="InterPro" id="IPR036291">
    <property type="entry name" value="NAD(P)-bd_dom_sf"/>
</dbReference>
<dbReference type="NCBIfam" id="TIGR01763">
    <property type="entry name" value="MalateDH_bact"/>
    <property type="match status" value="1"/>
</dbReference>
<dbReference type="NCBIfam" id="NF004863">
    <property type="entry name" value="PRK06223.1"/>
    <property type="match status" value="1"/>
</dbReference>
<dbReference type="PANTHER" id="PTHR43128">
    <property type="entry name" value="L-2-HYDROXYCARBOXYLATE DEHYDROGENASE (NAD(P)(+))"/>
    <property type="match status" value="1"/>
</dbReference>
<dbReference type="PANTHER" id="PTHR43128:SF16">
    <property type="entry name" value="L-LACTATE DEHYDROGENASE"/>
    <property type="match status" value="1"/>
</dbReference>
<dbReference type="Pfam" id="PF02866">
    <property type="entry name" value="Ldh_1_C"/>
    <property type="match status" value="1"/>
</dbReference>
<dbReference type="Pfam" id="PF00056">
    <property type="entry name" value="Ldh_1_N"/>
    <property type="match status" value="1"/>
</dbReference>
<dbReference type="PIRSF" id="PIRSF000102">
    <property type="entry name" value="Lac_mal_DH"/>
    <property type="match status" value="1"/>
</dbReference>
<dbReference type="PRINTS" id="PR00086">
    <property type="entry name" value="LLDHDRGNASE"/>
</dbReference>
<dbReference type="SUPFAM" id="SSF56327">
    <property type="entry name" value="LDH C-terminal domain-like"/>
    <property type="match status" value="1"/>
</dbReference>
<dbReference type="SUPFAM" id="SSF51735">
    <property type="entry name" value="NAD(P)-binding Rossmann-fold domains"/>
    <property type="match status" value="1"/>
</dbReference>
<organism>
    <name type="scientific">Bacillus cereus (strain ZK / E33L)</name>
    <dbReference type="NCBI Taxonomy" id="288681"/>
    <lineage>
        <taxon>Bacteria</taxon>
        <taxon>Bacillati</taxon>
        <taxon>Bacillota</taxon>
        <taxon>Bacilli</taxon>
        <taxon>Bacillales</taxon>
        <taxon>Bacillaceae</taxon>
        <taxon>Bacillus</taxon>
        <taxon>Bacillus cereus group</taxon>
    </lineage>
</organism>
<gene>
    <name evidence="1" type="primary">mdh</name>
    <name type="ordered locus">BCE33L4333</name>
</gene>
<sequence length="312" mass="33532">MTIKRKKVSVIGAGFTGATTAFLLAQKELADVVLVDIPQLENPTKGKALDMLEASPVQGFDANIIGTSDYADTADSDVVVITAGIARKPGMSRDDLVATNSKIMKSITRDIAKHSPNAIIVVLTNPVDAMTYSVFKEAGFPKERVIGQSGVLDTARFRTFIAQELNFSVKDITGFVLGGHGDDMVPLVRYSYAGGIPLETLIPKERLEAIVERTRKGGGEIVGLLGNGSAYYAPAASLVEMTEAILKDQRRVLPAIAYLEGEYGYSDLYLGVPVILGGNGIEKIIELELLADEKEALDRSVESVRNVMKVLV</sequence>
<reference key="1">
    <citation type="journal article" date="2006" name="J. Bacteriol.">
        <title>Pathogenomic sequence analysis of Bacillus cereus and Bacillus thuringiensis isolates closely related to Bacillus anthracis.</title>
        <authorList>
            <person name="Han C.S."/>
            <person name="Xie G."/>
            <person name="Challacombe J.F."/>
            <person name="Altherr M.R."/>
            <person name="Bhotika S.S."/>
            <person name="Bruce D."/>
            <person name="Campbell C.S."/>
            <person name="Campbell M.L."/>
            <person name="Chen J."/>
            <person name="Chertkov O."/>
            <person name="Cleland C."/>
            <person name="Dimitrijevic M."/>
            <person name="Doggett N.A."/>
            <person name="Fawcett J.J."/>
            <person name="Glavina T."/>
            <person name="Goodwin L.A."/>
            <person name="Hill K.K."/>
            <person name="Hitchcock P."/>
            <person name="Jackson P.J."/>
            <person name="Keim P."/>
            <person name="Kewalramani A.R."/>
            <person name="Longmire J."/>
            <person name="Lucas S."/>
            <person name="Malfatti S."/>
            <person name="McMurry K."/>
            <person name="Meincke L.J."/>
            <person name="Misra M."/>
            <person name="Moseman B.L."/>
            <person name="Mundt M."/>
            <person name="Munk A.C."/>
            <person name="Okinaka R.T."/>
            <person name="Parson-Quintana B."/>
            <person name="Reilly L.P."/>
            <person name="Richardson P."/>
            <person name="Robinson D.L."/>
            <person name="Rubin E."/>
            <person name="Saunders E."/>
            <person name="Tapia R."/>
            <person name="Tesmer J.G."/>
            <person name="Thayer N."/>
            <person name="Thompson L.S."/>
            <person name="Tice H."/>
            <person name="Ticknor L.O."/>
            <person name="Wills P.L."/>
            <person name="Brettin T.S."/>
            <person name="Gilna P."/>
        </authorList>
    </citation>
    <scope>NUCLEOTIDE SEQUENCE [LARGE SCALE GENOMIC DNA]</scope>
    <source>
        <strain>ZK / E33L</strain>
    </source>
</reference>
<evidence type="ECO:0000255" key="1">
    <source>
        <dbReference type="HAMAP-Rule" id="MF_00487"/>
    </source>
</evidence>
<comment type="function">
    <text evidence="1">Catalyzes the reversible oxidation of malate to oxaloacetate.</text>
</comment>
<comment type="catalytic activity">
    <reaction evidence="1">
        <text>(S)-malate + NAD(+) = oxaloacetate + NADH + H(+)</text>
        <dbReference type="Rhea" id="RHEA:21432"/>
        <dbReference type="ChEBI" id="CHEBI:15378"/>
        <dbReference type="ChEBI" id="CHEBI:15589"/>
        <dbReference type="ChEBI" id="CHEBI:16452"/>
        <dbReference type="ChEBI" id="CHEBI:57540"/>
        <dbReference type="ChEBI" id="CHEBI:57945"/>
        <dbReference type="EC" id="1.1.1.37"/>
    </reaction>
</comment>
<comment type="similarity">
    <text evidence="1">Belongs to the LDH/MDH superfamily. MDH type 3 family.</text>
</comment>
<accession>Q633K5</accession>
<protein>
    <recommendedName>
        <fullName evidence="1">Malate dehydrogenase</fullName>
        <ecNumber evidence="1">1.1.1.37</ecNumber>
    </recommendedName>
</protein>
<proteinExistence type="inferred from homology"/>
<feature type="chain" id="PRO_0000241942" description="Malate dehydrogenase">
    <location>
        <begin position="1"/>
        <end position="312"/>
    </location>
</feature>
<feature type="active site" description="Proton acceptor" evidence="1">
    <location>
        <position position="180"/>
    </location>
</feature>
<feature type="binding site" evidence="1">
    <location>
        <begin position="12"/>
        <end position="17"/>
    </location>
    <ligand>
        <name>NAD(+)</name>
        <dbReference type="ChEBI" id="CHEBI:57540"/>
    </ligand>
</feature>
<feature type="binding site" evidence="1">
    <location>
        <position position="36"/>
    </location>
    <ligand>
        <name>NAD(+)</name>
        <dbReference type="ChEBI" id="CHEBI:57540"/>
    </ligand>
</feature>
<feature type="binding site" evidence="1">
    <location>
        <position position="87"/>
    </location>
    <ligand>
        <name>substrate</name>
    </ligand>
</feature>
<feature type="binding site" evidence="1">
    <location>
        <position position="93"/>
    </location>
    <ligand>
        <name>substrate</name>
    </ligand>
</feature>
<feature type="binding site" evidence="1">
    <location>
        <position position="100"/>
    </location>
    <ligand>
        <name>NAD(+)</name>
        <dbReference type="ChEBI" id="CHEBI:57540"/>
    </ligand>
</feature>
<feature type="binding site" evidence="1">
    <location>
        <begin position="123"/>
        <end position="125"/>
    </location>
    <ligand>
        <name>NAD(+)</name>
        <dbReference type="ChEBI" id="CHEBI:57540"/>
    </ligand>
</feature>
<feature type="binding site" evidence="1">
    <location>
        <position position="125"/>
    </location>
    <ligand>
        <name>substrate</name>
    </ligand>
</feature>
<feature type="binding site" evidence="1">
    <location>
        <position position="156"/>
    </location>
    <ligand>
        <name>substrate</name>
    </ligand>
</feature>
<feature type="modified residue" description="Phosphoserine" evidence="1">
    <location>
        <position position="149"/>
    </location>
</feature>
<keyword id="KW-0520">NAD</keyword>
<keyword id="KW-0560">Oxidoreductase</keyword>
<keyword id="KW-0597">Phosphoprotein</keyword>
<keyword id="KW-0816">Tricarboxylic acid cycle</keyword>
<name>MDH_BACCZ</name>